<organism>
    <name type="scientific">Mycoplasma mobile (strain ATCC 43663 / 163K / NCTC 11711)</name>
    <name type="common">Mesomycoplasma mobile</name>
    <dbReference type="NCBI Taxonomy" id="267748"/>
    <lineage>
        <taxon>Bacteria</taxon>
        <taxon>Bacillati</taxon>
        <taxon>Mycoplasmatota</taxon>
        <taxon>Mycoplasmoidales</taxon>
        <taxon>Metamycoplasmataceae</taxon>
        <taxon>Mesomycoplasma</taxon>
    </lineage>
</organism>
<feature type="chain" id="PRO_0000233511" description="Small ribosomal subunit protein uS17">
    <location>
        <begin position="1"/>
        <end position="92"/>
    </location>
</feature>
<name>RS17_MYCM1</name>
<keyword id="KW-1185">Reference proteome</keyword>
<keyword id="KW-0687">Ribonucleoprotein</keyword>
<keyword id="KW-0689">Ribosomal protein</keyword>
<keyword id="KW-0694">RNA-binding</keyword>
<keyword id="KW-0699">rRNA-binding</keyword>
<comment type="function">
    <text evidence="1">One of the primary rRNA binding proteins, it binds specifically to the 5'-end of 16S ribosomal RNA.</text>
</comment>
<comment type="subunit">
    <text evidence="1">Part of the 30S ribosomal subunit.</text>
</comment>
<comment type="similarity">
    <text evidence="1">Belongs to the universal ribosomal protein uS17 family.</text>
</comment>
<gene>
    <name evidence="1" type="primary">rpsQ</name>
    <name type="ordered locus">MMOB2440</name>
</gene>
<evidence type="ECO:0000255" key="1">
    <source>
        <dbReference type="HAMAP-Rule" id="MF_01345"/>
    </source>
</evidence>
<evidence type="ECO:0000305" key="2"/>
<sequence length="92" mass="10569">MQERINRRKALTGVVVSDKSSKTIVVAVDTFKKDPLYQKRFKSTKKFAAHDEKEEAQMGDIVKIVGTRPLSKTKFFRLEKIRQRAKEGKGSE</sequence>
<proteinExistence type="inferred from homology"/>
<protein>
    <recommendedName>
        <fullName evidence="1">Small ribosomal subunit protein uS17</fullName>
    </recommendedName>
    <alternativeName>
        <fullName evidence="2">30S ribosomal protein S17</fullName>
    </alternativeName>
</protein>
<dbReference type="EMBL" id="AE017308">
    <property type="protein sequence ID" value="AAT27730.1"/>
    <property type="molecule type" value="Genomic_DNA"/>
</dbReference>
<dbReference type="RefSeq" id="WP_011264764.1">
    <property type="nucleotide sequence ID" value="NC_006908.1"/>
</dbReference>
<dbReference type="SMR" id="Q6KI46"/>
<dbReference type="STRING" id="267748.MMOB2440"/>
<dbReference type="KEGG" id="mmo:MMOB2440"/>
<dbReference type="eggNOG" id="COG0186">
    <property type="taxonomic scope" value="Bacteria"/>
</dbReference>
<dbReference type="HOGENOM" id="CLU_073626_1_0_14"/>
<dbReference type="OrthoDB" id="9811714at2"/>
<dbReference type="Proteomes" id="UP000009072">
    <property type="component" value="Chromosome"/>
</dbReference>
<dbReference type="GO" id="GO:0022627">
    <property type="term" value="C:cytosolic small ribosomal subunit"/>
    <property type="evidence" value="ECO:0007669"/>
    <property type="project" value="TreeGrafter"/>
</dbReference>
<dbReference type="GO" id="GO:0019843">
    <property type="term" value="F:rRNA binding"/>
    <property type="evidence" value="ECO:0007669"/>
    <property type="project" value="UniProtKB-UniRule"/>
</dbReference>
<dbReference type="GO" id="GO:0003735">
    <property type="term" value="F:structural constituent of ribosome"/>
    <property type="evidence" value="ECO:0007669"/>
    <property type="project" value="InterPro"/>
</dbReference>
<dbReference type="GO" id="GO:0006412">
    <property type="term" value="P:translation"/>
    <property type="evidence" value="ECO:0007669"/>
    <property type="project" value="UniProtKB-UniRule"/>
</dbReference>
<dbReference type="CDD" id="cd00364">
    <property type="entry name" value="Ribosomal_uS17"/>
    <property type="match status" value="1"/>
</dbReference>
<dbReference type="Gene3D" id="2.40.50.140">
    <property type="entry name" value="Nucleic acid-binding proteins"/>
    <property type="match status" value="1"/>
</dbReference>
<dbReference type="HAMAP" id="MF_01345_B">
    <property type="entry name" value="Ribosomal_uS17_B"/>
    <property type="match status" value="1"/>
</dbReference>
<dbReference type="InterPro" id="IPR012340">
    <property type="entry name" value="NA-bd_OB-fold"/>
</dbReference>
<dbReference type="InterPro" id="IPR000266">
    <property type="entry name" value="Ribosomal_uS17"/>
</dbReference>
<dbReference type="InterPro" id="IPR019984">
    <property type="entry name" value="Ribosomal_uS17_bact/chlr"/>
</dbReference>
<dbReference type="NCBIfam" id="NF004123">
    <property type="entry name" value="PRK05610.1"/>
    <property type="match status" value="1"/>
</dbReference>
<dbReference type="NCBIfam" id="TIGR03635">
    <property type="entry name" value="uS17_bact"/>
    <property type="match status" value="1"/>
</dbReference>
<dbReference type="PANTHER" id="PTHR10744">
    <property type="entry name" value="40S RIBOSOMAL PROTEIN S11 FAMILY MEMBER"/>
    <property type="match status" value="1"/>
</dbReference>
<dbReference type="PANTHER" id="PTHR10744:SF1">
    <property type="entry name" value="SMALL RIBOSOMAL SUBUNIT PROTEIN US17M"/>
    <property type="match status" value="1"/>
</dbReference>
<dbReference type="Pfam" id="PF00366">
    <property type="entry name" value="Ribosomal_S17"/>
    <property type="match status" value="1"/>
</dbReference>
<dbReference type="PRINTS" id="PR00973">
    <property type="entry name" value="RIBOSOMALS17"/>
</dbReference>
<dbReference type="SUPFAM" id="SSF50249">
    <property type="entry name" value="Nucleic acid-binding proteins"/>
    <property type="match status" value="1"/>
</dbReference>
<accession>Q6KI46</accession>
<reference key="1">
    <citation type="journal article" date="2004" name="Genome Res.">
        <title>The complete genome and proteome of Mycoplasma mobile.</title>
        <authorList>
            <person name="Jaffe J.D."/>
            <person name="Stange-Thomann N."/>
            <person name="Smith C."/>
            <person name="DeCaprio D."/>
            <person name="Fisher S."/>
            <person name="Butler J."/>
            <person name="Calvo S."/>
            <person name="Elkins T."/>
            <person name="FitzGerald M.G."/>
            <person name="Hafez N."/>
            <person name="Kodira C.D."/>
            <person name="Major J."/>
            <person name="Wang S."/>
            <person name="Wilkinson J."/>
            <person name="Nicol R."/>
            <person name="Nusbaum C."/>
            <person name="Birren B."/>
            <person name="Berg H.C."/>
            <person name="Church G.M."/>
        </authorList>
    </citation>
    <scope>NUCLEOTIDE SEQUENCE [LARGE SCALE GENOMIC DNA]</scope>
    <source>
        <strain>ATCC 43663 / NCTC 11711 / 163 K</strain>
    </source>
</reference>